<evidence type="ECO:0000255" key="1">
    <source>
        <dbReference type="PROSITE-ProRule" id="PRU00978"/>
    </source>
</evidence>
<evidence type="ECO:0000256" key="2">
    <source>
        <dbReference type="SAM" id="MobiDB-lite"/>
    </source>
</evidence>
<evidence type="ECO:0000269" key="3">
    <source>
    </source>
</evidence>
<evidence type="ECO:0000269" key="4">
    <source>
    </source>
</evidence>
<evidence type="ECO:0000269" key="5">
    <source>
    </source>
</evidence>
<evidence type="ECO:0000305" key="6"/>
<accession>P42775</accession>
<gene>
    <name type="primary">GBF2</name>
    <name type="synonym">BZIP54</name>
    <name type="ordered locus">At4g01120</name>
    <name type="ORF">F2N1.12</name>
</gene>
<name>GBF2_ARATH</name>
<keyword id="KW-0238">DNA-binding</keyword>
<keyword id="KW-0539">Nucleus</keyword>
<keyword id="KW-1185">Reference proteome</keyword>
<keyword id="KW-0804">Transcription</keyword>
<keyword id="KW-0805">Transcription regulation</keyword>
<organism>
    <name type="scientific">Arabidopsis thaliana</name>
    <name type="common">Mouse-ear cress</name>
    <dbReference type="NCBI Taxonomy" id="3702"/>
    <lineage>
        <taxon>Eukaryota</taxon>
        <taxon>Viridiplantae</taxon>
        <taxon>Streptophyta</taxon>
        <taxon>Embryophyta</taxon>
        <taxon>Tracheophyta</taxon>
        <taxon>Spermatophyta</taxon>
        <taxon>Magnoliopsida</taxon>
        <taxon>eudicotyledons</taxon>
        <taxon>Gunneridae</taxon>
        <taxon>Pentapetalae</taxon>
        <taxon>rosids</taxon>
        <taxon>malvids</taxon>
        <taxon>Brassicales</taxon>
        <taxon>Brassicaceae</taxon>
        <taxon>Camelineae</taxon>
        <taxon>Arabidopsis</taxon>
    </lineage>
</organism>
<sequence length="360" mass="38789">MGSNEEGNPTNNSDKPSQAAAPEQSNVHVYHHDWAAMQAYYGPRVGIPQYYNSNLAPGHAPPPYMWASPSPMMAPYGAPYPPFCPPGGVYAHPGVQMGSQPQGPVSQSASGVTTPLTIDAPANSAGNSDHGFMKKLKEFDGLAMSISNNKVGSAEHSSSEHRSSQSSENDGSSNGSDGNTTGGEQSRRKRRQQRSPSTGERPSSQNSLPLRGENEKPDVTMGTPVMPTAMSFQNSAGMNGVPQPWNEKEVKREKRKQSNRESARRSRLRKQAETEQLSVKVDALVAENMSLRSKLGQLNNESEKLRLENEAILDQLKAQATGKTENLISRVDKNNSVSGSKTVQHQLLNASPITDPVAAS</sequence>
<feature type="chain" id="PRO_0000076566" description="G-box-binding factor 2">
    <location>
        <begin position="1"/>
        <end position="360"/>
    </location>
</feature>
<feature type="domain" description="bZIP" evidence="1">
    <location>
        <begin position="249"/>
        <end position="312"/>
    </location>
</feature>
<feature type="region of interest" description="Disordered" evidence="2">
    <location>
        <begin position="1"/>
        <end position="26"/>
    </location>
</feature>
<feature type="region of interest" description="Disordered" evidence="2">
    <location>
        <begin position="150"/>
        <end position="275"/>
    </location>
</feature>
<feature type="region of interest" description="Basic motif" evidence="1">
    <location>
        <begin position="251"/>
        <end position="270"/>
    </location>
</feature>
<feature type="region of interest" description="Leucine-zipper" evidence="1">
    <location>
        <begin position="277"/>
        <end position="312"/>
    </location>
</feature>
<feature type="region of interest" description="Disordered" evidence="2">
    <location>
        <begin position="335"/>
        <end position="360"/>
    </location>
</feature>
<feature type="compositionally biased region" description="Polar residues" evidence="2">
    <location>
        <begin position="1"/>
        <end position="16"/>
    </location>
</feature>
<feature type="compositionally biased region" description="Low complexity" evidence="2">
    <location>
        <begin position="164"/>
        <end position="184"/>
    </location>
</feature>
<feature type="compositionally biased region" description="Polar residues" evidence="2">
    <location>
        <begin position="198"/>
        <end position="208"/>
    </location>
</feature>
<feature type="compositionally biased region" description="Basic and acidic residues" evidence="2">
    <location>
        <begin position="246"/>
        <end position="264"/>
    </location>
</feature>
<feature type="compositionally biased region" description="Polar residues" evidence="2">
    <location>
        <begin position="335"/>
        <end position="352"/>
    </location>
</feature>
<comment type="function">
    <text evidence="3">Binds to the G-box motif (5'-CCACGTGG-3') of the rbcS-1A gene promoter. G-box and G-box-like motifs are cis-acting elements defined in promoters of certain plant genes which are regulated by such diverse stimuli as light-induction or hormone control. GBF2 is found to bind asymmetrically to the G-box.</text>
</comment>
<comment type="subunit">
    <text evidence="4 5">DNA-binding heterodimer. Interacts with GBF4 (PubMed:8146148). Interacts with BZIP16 and BZIP68 (PubMed:18315949).</text>
</comment>
<comment type="subcellular location">
    <subcellularLocation>
        <location evidence="1 3">Nucleus</location>
    </subcellularLocation>
</comment>
<comment type="tissue specificity">
    <text evidence="3">Found in both light and dark grown leaves.</text>
</comment>
<comment type="similarity">
    <text evidence="6">Belongs to the bZIP family.</text>
</comment>
<proteinExistence type="evidence at protein level"/>
<protein>
    <recommendedName>
        <fullName>G-box-binding factor 2</fullName>
    </recommendedName>
    <alternativeName>
        <fullName>bZIP transcription factor 54</fullName>
        <shortName>AtbZIP54</shortName>
    </alternativeName>
</protein>
<reference key="1">
    <citation type="journal article" date="1992" name="EMBO J.">
        <title>Heterodimerization between light-regulated and ubiquitously expressed Arabidopsis GBF bZIP proteins.</title>
        <authorList>
            <person name="Schindler U."/>
            <person name="Menkens A.E."/>
            <person name="Beckmann H."/>
            <person name="Ecker J.R."/>
            <person name="Cashmore A.R."/>
        </authorList>
    </citation>
    <scope>NUCLEOTIDE SEQUENCE [MRNA]</scope>
    <scope>FUNCTION</scope>
    <scope>SUBCELLULAR LOCATION</scope>
    <scope>TISSUE SPECIFICITY</scope>
    <source>
        <strain>cv. Columbia</strain>
        <tissue>Leaf</tissue>
        <tissue>Stem</tissue>
    </source>
</reference>
<reference key="2">
    <citation type="online journal article" date="1998" name="Plant Gene Register">
        <title>Cloning and identification of the nucleotide sequence of the Arabidopsis thaliana gene encoding G-box binding factor 2 (GBF2).</title>
        <authorList>
            <person name="Jarillo J.A."/>
            <person name="Cashmore A.R."/>
        </authorList>
        <locator>PGR98-101</locator>
    </citation>
    <scope>NUCLEOTIDE SEQUENCE [GENOMIC DNA]</scope>
    <source>
        <strain>cv. Columbia</strain>
    </source>
</reference>
<reference key="3">
    <citation type="journal article" date="1999" name="Nature">
        <title>Sequence and analysis of chromosome 4 of the plant Arabidopsis thaliana.</title>
        <authorList>
            <person name="Mayer K.F.X."/>
            <person name="Schueller C."/>
            <person name="Wambutt R."/>
            <person name="Murphy G."/>
            <person name="Volckaert G."/>
            <person name="Pohl T."/>
            <person name="Duesterhoeft A."/>
            <person name="Stiekema W."/>
            <person name="Entian K.-D."/>
            <person name="Terryn N."/>
            <person name="Harris B."/>
            <person name="Ansorge W."/>
            <person name="Brandt P."/>
            <person name="Grivell L.A."/>
            <person name="Rieger M."/>
            <person name="Weichselgartner M."/>
            <person name="de Simone V."/>
            <person name="Obermaier B."/>
            <person name="Mache R."/>
            <person name="Mueller M."/>
            <person name="Kreis M."/>
            <person name="Delseny M."/>
            <person name="Puigdomenech P."/>
            <person name="Watson M."/>
            <person name="Schmidtheini T."/>
            <person name="Reichert B."/>
            <person name="Portetelle D."/>
            <person name="Perez-Alonso M."/>
            <person name="Boutry M."/>
            <person name="Bancroft I."/>
            <person name="Vos P."/>
            <person name="Hoheisel J."/>
            <person name="Zimmermann W."/>
            <person name="Wedler H."/>
            <person name="Ridley P."/>
            <person name="Langham S.-A."/>
            <person name="McCullagh B."/>
            <person name="Bilham L."/>
            <person name="Robben J."/>
            <person name="van der Schueren J."/>
            <person name="Grymonprez B."/>
            <person name="Chuang Y.-J."/>
            <person name="Vandenbussche F."/>
            <person name="Braeken M."/>
            <person name="Weltjens I."/>
            <person name="Voet M."/>
            <person name="Bastiaens I."/>
            <person name="Aert R."/>
            <person name="Defoor E."/>
            <person name="Weitzenegger T."/>
            <person name="Bothe G."/>
            <person name="Ramsperger U."/>
            <person name="Hilbert H."/>
            <person name="Braun M."/>
            <person name="Holzer E."/>
            <person name="Brandt A."/>
            <person name="Peters S."/>
            <person name="van Staveren M."/>
            <person name="Dirkse W."/>
            <person name="Mooijman P."/>
            <person name="Klein Lankhorst R."/>
            <person name="Rose M."/>
            <person name="Hauf J."/>
            <person name="Koetter P."/>
            <person name="Berneiser S."/>
            <person name="Hempel S."/>
            <person name="Feldpausch M."/>
            <person name="Lamberth S."/>
            <person name="Van den Daele H."/>
            <person name="De Keyser A."/>
            <person name="Buysshaert C."/>
            <person name="Gielen J."/>
            <person name="Villarroel R."/>
            <person name="De Clercq R."/>
            <person name="van Montagu M."/>
            <person name="Rogers J."/>
            <person name="Cronin A."/>
            <person name="Quail M.A."/>
            <person name="Bray-Allen S."/>
            <person name="Clark L."/>
            <person name="Doggett J."/>
            <person name="Hall S."/>
            <person name="Kay M."/>
            <person name="Lennard N."/>
            <person name="McLay K."/>
            <person name="Mayes R."/>
            <person name="Pettett A."/>
            <person name="Rajandream M.A."/>
            <person name="Lyne M."/>
            <person name="Benes V."/>
            <person name="Rechmann S."/>
            <person name="Borkova D."/>
            <person name="Bloecker H."/>
            <person name="Scharfe M."/>
            <person name="Grimm M."/>
            <person name="Loehnert T.-H."/>
            <person name="Dose S."/>
            <person name="de Haan M."/>
            <person name="Maarse A.C."/>
            <person name="Schaefer M."/>
            <person name="Mueller-Auer S."/>
            <person name="Gabel C."/>
            <person name="Fuchs M."/>
            <person name="Fartmann B."/>
            <person name="Granderath K."/>
            <person name="Dauner D."/>
            <person name="Herzl A."/>
            <person name="Neumann S."/>
            <person name="Argiriou A."/>
            <person name="Vitale D."/>
            <person name="Liguori R."/>
            <person name="Piravandi E."/>
            <person name="Massenet O."/>
            <person name="Quigley F."/>
            <person name="Clabauld G."/>
            <person name="Muendlein A."/>
            <person name="Felber R."/>
            <person name="Schnabl S."/>
            <person name="Hiller R."/>
            <person name="Schmidt W."/>
            <person name="Lecharny A."/>
            <person name="Aubourg S."/>
            <person name="Chefdor F."/>
            <person name="Cooke R."/>
            <person name="Berger C."/>
            <person name="Monfort A."/>
            <person name="Casacuberta E."/>
            <person name="Gibbons T."/>
            <person name="Weber N."/>
            <person name="Vandenbol M."/>
            <person name="Bargues M."/>
            <person name="Terol J."/>
            <person name="Torres A."/>
            <person name="Perez-Perez A."/>
            <person name="Purnelle B."/>
            <person name="Bent E."/>
            <person name="Johnson S."/>
            <person name="Tacon D."/>
            <person name="Jesse T."/>
            <person name="Heijnen L."/>
            <person name="Schwarz S."/>
            <person name="Scholler P."/>
            <person name="Heber S."/>
            <person name="Francs P."/>
            <person name="Bielke C."/>
            <person name="Frishman D."/>
            <person name="Haase D."/>
            <person name="Lemcke K."/>
            <person name="Mewes H.-W."/>
            <person name="Stocker S."/>
            <person name="Zaccaria P."/>
            <person name="Bevan M."/>
            <person name="Wilson R.K."/>
            <person name="de la Bastide M."/>
            <person name="Habermann K."/>
            <person name="Parnell L."/>
            <person name="Dedhia N."/>
            <person name="Gnoj L."/>
            <person name="Schutz K."/>
            <person name="Huang E."/>
            <person name="Spiegel L."/>
            <person name="Sekhon M."/>
            <person name="Murray J."/>
            <person name="Sheet P."/>
            <person name="Cordes M."/>
            <person name="Abu-Threideh J."/>
            <person name="Stoneking T."/>
            <person name="Kalicki J."/>
            <person name="Graves T."/>
            <person name="Harmon G."/>
            <person name="Edwards J."/>
            <person name="Latreille P."/>
            <person name="Courtney L."/>
            <person name="Cloud J."/>
            <person name="Abbott A."/>
            <person name="Scott K."/>
            <person name="Johnson D."/>
            <person name="Minx P."/>
            <person name="Bentley D."/>
            <person name="Fulton B."/>
            <person name="Miller N."/>
            <person name="Greco T."/>
            <person name="Kemp K."/>
            <person name="Kramer J."/>
            <person name="Fulton L."/>
            <person name="Mardis E."/>
            <person name="Dante M."/>
            <person name="Pepin K."/>
            <person name="Hillier L.W."/>
            <person name="Nelson J."/>
            <person name="Spieth J."/>
            <person name="Ryan E."/>
            <person name="Andrews S."/>
            <person name="Geisel C."/>
            <person name="Layman D."/>
            <person name="Du H."/>
            <person name="Ali J."/>
            <person name="Berghoff A."/>
            <person name="Jones K."/>
            <person name="Drone K."/>
            <person name="Cotton M."/>
            <person name="Joshu C."/>
            <person name="Antonoiu B."/>
            <person name="Zidanic M."/>
            <person name="Strong C."/>
            <person name="Sun H."/>
            <person name="Lamar B."/>
            <person name="Yordan C."/>
            <person name="Ma P."/>
            <person name="Zhong J."/>
            <person name="Preston R."/>
            <person name="Vil D."/>
            <person name="Shekher M."/>
            <person name="Matero A."/>
            <person name="Shah R."/>
            <person name="Swaby I.K."/>
            <person name="O'Shaughnessy A."/>
            <person name="Rodriguez M."/>
            <person name="Hoffman J."/>
            <person name="Till S."/>
            <person name="Granat S."/>
            <person name="Shohdy N."/>
            <person name="Hasegawa A."/>
            <person name="Hameed A."/>
            <person name="Lodhi M."/>
            <person name="Johnson A."/>
            <person name="Chen E."/>
            <person name="Marra M.A."/>
            <person name="Martienssen R."/>
            <person name="McCombie W.R."/>
        </authorList>
    </citation>
    <scope>NUCLEOTIDE SEQUENCE [LARGE SCALE GENOMIC DNA]</scope>
    <source>
        <strain>cv. Columbia</strain>
    </source>
</reference>
<reference key="4">
    <citation type="journal article" date="2017" name="Plant J.">
        <title>Araport11: a complete reannotation of the Arabidopsis thaliana reference genome.</title>
        <authorList>
            <person name="Cheng C.Y."/>
            <person name="Krishnakumar V."/>
            <person name="Chan A.P."/>
            <person name="Thibaud-Nissen F."/>
            <person name="Schobel S."/>
            <person name="Town C.D."/>
        </authorList>
    </citation>
    <scope>GENOME REANNOTATION</scope>
    <source>
        <strain>cv. Columbia</strain>
    </source>
</reference>
<reference key="5">
    <citation type="journal article" date="2003" name="Science">
        <title>Empirical analysis of transcriptional activity in the Arabidopsis genome.</title>
        <authorList>
            <person name="Yamada K."/>
            <person name="Lim J."/>
            <person name="Dale J.M."/>
            <person name="Chen H."/>
            <person name="Shinn P."/>
            <person name="Palm C.J."/>
            <person name="Southwick A.M."/>
            <person name="Wu H.C."/>
            <person name="Kim C.J."/>
            <person name="Nguyen M."/>
            <person name="Pham P.K."/>
            <person name="Cheuk R.F."/>
            <person name="Karlin-Newmann G."/>
            <person name="Liu S.X."/>
            <person name="Lam B."/>
            <person name="Sakano H."/>
            <person name="Wu T."/>
            <person name="Yu G."/>
            <person name="Miranda M."/>
            <person name="Quach H.L."/>
            <person name="Tripp M."/>
            <person name="Chang C.H."/>
            <person name="Lee J.M."/>
            <person name="Toriumi M.J."/>
            <person name="Chan M.M."/>
            <person name="Tang C.C."/>
            <person name="Onodera C.S."/>
            <person name="Deng J.M."/>
            <person name="Akiyama K."/>
            <person name="Ansari Y."/>
            <person name="Arakawa T."/>
            <person name="Banh J."/>
            <person name="Banno F."/>
            <person name="Bowser L."/>
            <person name="Brooks S.Y."/>
            <person name="Carninci P."/>
            <person name="Chao Q."/>
            <person name="Choy N."/>
            <person name="Enju A."/>
            <person name="Goldsmith A.D."/>
            <person name="Gurjal M."/>
            <person name="Hansen N.F."/>
            <person name="Hayashizaki Y."/>
            <person name="Johnson-Hopson C."/>
            <person name="Hsuan V.W."/>
            <person name="Iida K."/>
            <person name="Karnes M."/>
            <person name="Khan S."/>
            <person name="Koesema E."/>
            <person name="Ishida J."/>
            <person name="Jiang P.X."/>
            <person name="Jones T."/>
            <person name="Kawai J."/>
            <person name="Kamiya A."/>
            <person name="Meyers C."/>
            <person name="Nakajima M."/>
            <person name="Narusaka M."/>
            <person name="Seki M."/>
            <person name="Sakurai T."/>
            <person name="Satou M."/>
            <person name="Tamse R."/>
            <person name="Vaysberg M."/>
            <person name="Wallender E.K."/>
            <person name="Wong C."/>
            <person name="Yamamura Y."/>
            <person name="Yuan S."/>
            <person name="Shinozaki K."/>
            <person name="Davis R.W."/>
            <person name="Theologis A."/>
            <person name="Ecker J.R."/>
        </authorList>
    </citation>
    <scope>NUCLEOTIDE SEQUENCE [LARGE SCALE MRNA]</scope>
    <source>
        <strain>cv. Columbia</strain>
    </source>
</reference>
<reference key="6">
    <citation type="journal article" date="1994" name="Proc. Natl. Acad. Sci. U.S.A.">
        <title>Isolation and characterization of a fourth Arabidopsis thaliana G-box-binding factor, which has similarities to Fos oncoprotein.</title>
        <authorList>
            <person name="Menkens A.E."/>
            <person name="Cashmore A.R."/>
        </authorList>
    </citation>
    <scope>INTERACTION WITH GBF4</scope>
    <source>
        <strain>cv. Columbia</strain>
    </source>
</reference>
<reference key="7">
    <citation type="journal article" date="2002" name="Trends Plant Sci.">
        <title>bZIP transcription factors in Arabidopsis.</title>
        <authorList>
            <person name="Jakoby M."/>
            <person name="Weisshaar B."/>
            <person name="Droege-Laser W."/>
            <person name="Vicente-Carbajosa J."/>
            <person name="Tiedemann J."/>
            <person name="Kroj T."/>
            <person name="Parcy F."/>
        </authorList>
    </citation>
    <scope>GENE FAMILY</scope>
    <scope>NOMENCLATURE</scope>
</reference>
<reference key="8">
    <citation type="journal article" date="2008" name="BMB Rep.">
        <title>AtbZIP16 and AtbZIP68, two new members of GBFs, can interact with other G group bZIPs in Arabidopsis thaliana.</title>
        <authorList>
            <person name="Shen H."/>
            <person name="Cao K."/>
            <person name="Wang X."/>
        </authorList>
    </citation>
    <scope>INTERACTION WITH BZIP16 AND BZIP68</scope>
</reference>
<dbReference type="EMBL" id="X63895">
    <property type="protein sequence ID" value="CAA45357.1"/>
    <property type="molecule type" value="mRNA"/>
</dbReference>
<dbReference type="EMBL" id="AF053228">
    <property type="protein sequence ID" value="AAC26198.1"/>
    <property type="molecule type" value="Genomic_DNA"/>
</dbReference>
<dbReference type="EMBL" id="AL161491">
    <property type="protein sequence ID" value="CAB80921.1"/>
    <property type="molecule type" value="Genomic_DNA"/>
</dbReference>
<dbReference type="EMBL" id="CP002687">
    <property type="protein sequence ID" value="AEE81984.1"/>
    <property type="molecule type" value="Genomic_DNA"/>
</dbReference>
<dbReference type="EMBL" id="AY062667">
    <property type="protein sequence ID" value="AAL32745.1"/>
    <property type="molecule type" value="mRNA"/>
</dbReference>
<dbReference type="EMBL" id="AY093316">
    <property type="protein sequence ID" value="AAM13315.1"/>
    <property type="molecule type" value="mRNA"/>
</dbReference>
<dbReference type="PIR" id="G85014">
    <property type="entry name" value="G85014"/>
</dbReference>
<dbReference type="RefSeq" id="NP_192021.1">
    <property type="nucleotide sequence ID" value="NM_116342.3"/>
</dbReference>
<dbReference type="SMR" id="P42775"/>
<dbReference type="BioGRID" id="11804">
    <property type="interactions" value="9"/>
</dbReference>
<dbReference type="FunCoup" id="P42775">
    <property type="interactions" value="392"/>
</dbReference>
<dbReference type="IntAct" id="P42775">
    <property type="interactions" value="10"/>
</dbReference>
<dbReference type="STRING" id="3702.P42775"/>
<dbReference type="iPTMnet" id="P42775"/>
<dbReference type="PaxDb" id="3702-AT4G01120.1"/>
<dbReference type="ProteomicsDB" id="222179"/>
<dbReference type="EnsemblPlants" id="AT4G01120.1">
    <property type="protein sequence ID" value="AT4G01120.1"/>
    <property type="gene ID" value="AT4G01120"/>
</dbReference>
<dbReference type="GeneID" id="826505"/>
<dbReference type="Gramene" id="AT4G01120.1">
    <property type="protein sequence ID" value="AT4G01120.1"/>
    <property type="gene ID" value="AT4G01120"/>
</dbReference>
<dbReference type="KEGG" id="ath:AT4G01120"/>
<dbReference type="Araport" id="AT4G01120"/>
<dbReference type="TAIR" id="AT4G01120">
    <property type="gene designation" value="GBF2"/>
</dbReference>
<dbReference type="eggNOG" id="ENOG502QRCN">
    <property type="taxonomic scope" value="Eukaryota"/>
</dbReference>
<dbReference type="HOGENOM" id="CLU_036349_1_0_1"/>
<dbReference type="InParanoid" id="P42775"/>
<dbReference type="OMA" id="APYPPFC"/>
<dbReference type="PhylomeDB" id="P42775"/>
<dbReference type="PRO" id="PR:P42775"/>
<dbReference type="Proteomes" id="UP000006548">
    <property type="component" value="Chromosome 4"/>
</dbReference>
<dbReference type="ExpressionAtlas" id="P42775">
    <property type="expression patterns" value="baseline and differential"/>
</dbReference>
<dbReference type="GO" id="GO:0005737">
    <property type="term" value="C:cytoplasm"/>
    <property type="evidence" value="ECO:0000314"/>
    <property type="project" value="TAIR"/>
</dbReference>
<dbReference type="GO" id="GO:0005634">
    <property type="term" value="C:nucleus"/>
    <property type="evidence" value="ECO:0000314"/>
    <property type="project" value="TAIR"/>
</dbReference>
<dbReference type="GO" id="GO:0003677">
    <property type="term" value="F:DNA binding"/>
    <property type="evidence" value="ECO:0000314"/>
    <property type="project" value="TAIR"/>
</dbReference>
<dbReference type="GO" id="GO:0003700">
    <property type="term" value="F:DNA-binding transcription factor activity"/>
    <property type="evidence" value="ECO:0000250"/>
    <property type="project" value="TAIR"/>
</dbReference>
<dbReference type="GO" id="GO:0043565">
    <property type="term" value="F:sequence-specific DNA binding"/>
    <property type="evidence" value="ECO:0000314"/>
    <property type="project" value="TAIR"/>
</dbReference>
<dbReference type="GO" id="GO:0000976">
    <property type="term" value="F:transcription cis-regulatory region binding"/>
    <property type="evidence" value="ECO:0000353"/>
    <property type="project" value="TAIR"/>
</dbReference>
<dbReference type="GO" id="GO:0019760">
    <property type="term" value="P:glucosinolate metabolic process"/>
    <property type="evidence" value="ECO:0000315"/>
    <property type="project" value="TAIR"/>
</dbReference>
<dbReference type="GO" id="GO:0009637">
    <property type="term" value="P:response to blue light"/>
    <property type="evidence" value="ECO:0000314"/>
    <property type="project" value="TAIR"/>
</dbReference>
<dbReference type="CDD" id="cd14702">
    <property type="entry name" value="bZIP_plant_GBF1"/>
    <property type="match status" value="1"/>
</dbReference>
<dbReference type="Gene3D" id="1.20.5.170">
    <property type="match status" value="1"/>
</dbReference>
<dbReference type="InterPro" id="IPR004827">
    <property type="entry name" value="bZIP"/>
</dbReference>
<dbReference type="InterPro" id="IPR045314">
    <property type="entry name" value="bZIP_plant_GBF1"/>
</dbReference>
<dbReference type="InterPro" id="IPR046347">
    <property type="entry name" value="bZIP_sf"/>
</dbReference>
<dbReference type="InterPro" id="IPR044827">
    <property type="entry name" value="GBF-like"/>
</dbReference>
<dbReference type="InterPro" id="IPR012900">
    <property type="entry name" value="MFMR"/>
</dbReference>
<dbReference type="PANTHER" id="PTHR45967:SF38">
    <property type="entry name" value="G-BOX-BINDING FACTOR 2"/>
    <property type="match status" value="1"/>
</dbReference>
<dbReference type="PANTHER" id="PTHR45967">
    <property type="entry name" value="G-BOX-BINDING FACTOR 3-RELATED"/>
    <property type="match status" value="1"/>
</dbReference>
<dbReference type="Pfam" id="PF00170">
    <property type="entry name" value="bZIP_1"/>
    <property type="match status" value="1"/>
</dbReference>
<dbReference type="Pfam" id="PF07777">
    <property type="entry name" value="MFMR"/>
    <property type="match status" value="1"/>
</dbReference>
<dbReference type="Pfam" id="PF16596">
    <property type="entry name" value="MFMR_assoc"/>
    <property type="match status" value="1"/>
</dbReference>
<dbReference type="SMART" id="SM00338">
    <property type="entry name" value="BRLZ"/>
    <property type="match status" value="1"/>
</dbReference>
<dbReference type="SUPFAM" id="SSF57959">
    <property type="entry name" value="Leucine zipper domain"/>
    <property type="match status" value="1"/>
</dbReference>
<dbReference type="PROSITE" id="PS50217">
    <property type="entry name" value="BZIP"/>
    <property type="match status" value="1"/>
</dbReference>
<dbReference type="PROSITE" id="PS00036">
    <property type="entry name" value="BZIP_BASIC"/>
    <property type="match status" value="1"/>
</dbReference>